<protein>
    <recommendedName>
        <fullName>Ubiquitin domain-containing protein UBFD1</fullName>
    </recommendedName>
</protein>
<evidence type="ECO:0000255" key="1">
    <source>
        <dbReference type="PROSITE-ProRule" id="PRU00214"/>
    </source>
</evidence>
<evidence type="ECO:0000256" key="2">
    <source>
        <dbReference type="SAM" id="MobiDB-lite"/>
    </source>
</evidence>
<evidence type="ECO:0007829" key="3">
    <source>
        <dbReference type="PDB" id="1V86"/>
    </source>
</evidence>
<dbReference type="EMBL" id="BC011313">
    <property type="protein sequence ID" value="AAH11313.2"/>
    <property type="molecule type" value="mRNA"/>
</dbReference>
<dbReference type="CCDS" id="CCDS21808.1"/>
<dbReference type="RefSeq" id="NP_613055.2">
    <property type="nucleotide sequence ID" value="NM_138589.2"/>
</dbReference>
<dbReference type="PDB" id="1V86">
    <property type="method" value="NMR"/>
    <property type="chains" value="A=135-216"/>
</dbReference>
<dbReference type="PDBsum" id="1V86"/>
<dbReference type="BMRB" id="Q78JW9"/>
<dbReference type="SMR" id="Q78JW9"/>
<dbReference type="BioGRID" id="205718">
    <property type="interactions" value="36"/>
</dbReference>
<dbReference type="FunCoup" id="Q78JW9">
    <property type="interactions" value="649"/>
</dbReference>
<dbReference type="STRING" id="10090.ENSMUSP00000033158"/>
<dbReference type="GlyGen" id="Q78JW9">
    <property type="glycosylation" value="1 site"/>
</dbReference>
<dbReference type="iPTMnet" id="Q78JW9"/>
<dbReference type="PhosphoSitePlus" id="Q78JW9"/>
<dbReference type="SwissPalm" id="Q78JW9"/>
<dbReference type="PaxDb" id="10090-ENSMUSP00000033158"/>
<dbReference type="PeptideAtlas" id="Q78JW9"/>
<dbReference type="ProteomicsDB" id="298087"/>
<dbReference type="Pumba" id="Q78JW9"/>
<dbReference type="Antibodypedia" id="55161">
    <property type="antibodies" value="146 antibodies from 22 providers"/>
</dbReference>
<dbReference type="DNASU" id="28018"/>
<dbReference type="Ensembl" id="ENSMUST00000033158.6">
    <property type="protein sequence ID" value="ENSMUSP00000033158.5"/>
    <property type="gene ID" value="ENSMUSG00000030870.13"/>
</dbReference>
<dbReference type="GeneID" id="28018"/>
<dbReference type="KEGG" id="mmu:28018"/>
<dbReference type="UCSC" id="uc009jof.1">
    <property type="organism name" value="mouse"/>
</dbReference>
<dbReference type="AGR" id="MGI:107301"/>
<dbReference type="CTD" id="56061"/>
<dbReference type="MGI" id="MGI:107301">
    <property type="gene designation" value="Ubfd1"/>
</dbReference>
<dbReference type="VEuPathDB" id="HostDB:ENSMUSG00000030870"/>
<dbReference type="eggNOG" id="KOG1872">
    <property type="taxonomic scope" value="Eukaryota"/>
</dbReference>
<dbReference type="GeneTree" id="ENSGT00390000012857"/>
<dbReference type="HOGENOM" id="CLU_079085_1_0_1"/>
<dbReference type="InParanoid" id="Q78JW9"/>
<dbReference type="OMA" id="SITXQHR"/>
<dbReference type="OrthoDB" id="267397at2759"/>
<dbReference type="PhylomeDB" id="Q78JW9"/>
<dbReference type="TreeFam" id="TF333280"/>
<dbReference type="BioGRID-ORCS" id="28018">
    <property type="hits" value="1 hit in 78 CRISPR screens"/>
</dbReference>
<dbReference type="ChiTaRS" id="Ubfd1">
    <property type="organism name" value="mouse"/>
</dbReference>
<dbReference type="EvolutionaryTrace" id="Q78JW9"/>
<dbReference type="PRO" id="PR:Q78JW9"/>
<dbReference type="Proteomes" id="UP000000589">
    <property type="component" value="Chromosome 7"/>
</dbReference>
<dbReference type="RNAct" id="Q78JW9">
    <property type="molecule type" value="protein"/>
</dbReference>
<dbReference type="Bgee" id="ENSMUSG00000030870">
    <property type="expression patterns" value="Expressed in secondary oocyte and 259 other cell types or tissues"/>
</dbReference>
<dbReference type="ExpressionAtlas" id="Q78JW9">
    <property type="expression patterns" value="baseline and differential"/>
</dbReference>
<dbReference type="CDD" id="cd17047">
    <property type="entry name" value="Ubl_UBFD1"/>
    <property type="match status" value="1"/>
</dbReference>
<dbReference type="FunFam" id="3.10.20.90:FF:000138">
    <property type="entry name" value="ubiquitin domain-containing protein UBFD1 isoform X2"/>
    <property type="match status" value="1"/>
</dbReference>
<dbReference type="Gene3D" id="3.10.20.90">
    <property type="entry name" value="Phosphatidylinositol 3-kinase Catalytic Subunit, Chain A, domain 1"/>
    <property type="match status" value="1"/>
</dbReference>
<dbReference type="InterPro" id="IPR039120">
    <property type="entry name" value="UBFD1"/>
</dbReference>
<dbReference type="InterPro" id="IPR000626">
    <property type="entry name" value="Ubiquitin-like_dom"/>
</dbReference>
<dbReference type="InterPro" id="IPR029071">
    <property type="entry name" value="Ubiquitin-like_domsf"/>
</dbReference>
<dbReference type="InterPro" id="IPR019954">
    <property type="entry name" value="Ubiquitin_CS"/>
</dbReference>
<dbReference type="PANTHER" id="PTHR16470">
    <property type="entry name" value="UBIQUITIN DOMAIN-CONTAINING PROTEIN UBFD1"/>
    <property type="match status" value="1"/>
</dbReference>
<dbReference type="PANTHER" id="PTHR16470:SF0">
    <property type="entry name" value="UBIQUITIN DOMAIN-CONTAINING PROTEIN UBFD1"/>
    <property type="match status" value="1"/>
</dbReference>
<dbReference type="Pfam" id="PF25343">
    <property type="entry name" value="PH_UBFD1_C"/>
    <property type="match status" value="1"/>
</dbReference>
<dbReference type="Pfam" id="PF00240">
    <property type="entry name" value="ubiquitin"/>
    <property type="match status" value="1"/>
</dbReference>
<dbReference type="SMART" id="SM00213">
    <property type="entry name" value="UBQ"/>
    <property type="match status" value="1"/>
</dbReference>
<dbReference type="SUPFAM" id="SSF54236">
    <property type="entry name" value="Ubiquitin-like"/>
    <property type="match status" value="1"/>
</dbReference>
<dbReference type="PROSITE" id="PS00299">
    <property type="entry name" value="UBIQUITIN_1"/>
    <property type="match status" value="1"/>
</dbReference>
<dbReference type="PROSITE" id="PS50053">
    <property type="entry name" value="UBIQUITIN_2"/>
    <property type="match status" value="1"/>
</dbReference>
<proteinExistence type="evidence at protein level"/>
<keyword id="KW-0002">3D-structure</keyword>
<keyword id="KW-1185">Reference proteome</keyword>
<name>UBFD1_MOUSE</name>
<accession>Q78JW9</accession>
<reference key="1">
    <citation type="journal article" date="2004" name="Genome Res.">
        <title>The status, quality, and expansion of the NIH full-length cDNA project: the Mammalian Gene Collection (MGC).</title>
        <authorList>
            <consortium name="The MGC Project Team"/>
        </authorList>
    </citation>
    <scope>NUCLEOTIDE SEQUENCE [LARGE SCALE MRNA]</scope>
    <source>
        <strain>FVB/N</strain>
        <tissue>Mammary tumor</tissue>
    </source>
</reference>
<reference key="2">
    <citation type="journal article" date="2010" name="Cell">
        <title>A tissue-specific atlas of mouse protein phosphorylation and expression.</title>
        <authorList>
            <person name="Huttlin E.L."/>
            <person name="Jedrychowski M.P."/>
            <person name="Elias J.E."/>
            <person name="Goswami T."/>
            <person name="Rad R."/>
            <person name="Beausoleil S.A."/>
            <person name="Villen J."/>
            <person name="Haas W."/>
            <person name="Sowa M.E."/>
            <person name="Gygi S.P."/>
        </authorList>
    </citation>
    <scope>IDENTIFICATION BY MASS SPECTROMETRY [LARGE SCALE ANALYSIS]</scope>
    <source>
        <tissue>Brain</tissue>
        <tissue>Kidney</tissue>
        <tissue>Liver</tissue>
        <tissue>Lung</tissue>
        <tissue>Pancreas</tissue>
        <tissue>Spleen</tissue>
        <tissue>Testis</tissue>
    </source>
</reference>
<reference key="3">
    <citation type="submission" date="2004-06" db="PDB data bank">
        <title>Solution structure of the ubiquitin domain from mouse D7WSU128E protein.</title>
        <authorList>
            <consortium name="RIKEN structural genomics initiative (RSGI)"/>
        </authorList>
    </citation>
    <scope>STRUCTURE BY NMR OF 129-217</scope>
</reference>
<sequence length="368" mass="40143">MLKRGRGRPGKRRRRVSIETSTCFRPACVKLGAGAGANLRQLASSRRPLRSWWVLYTIIMAAAGAPDGMEEPGMDTEAEAVATEAPARPLNCVEAEAAVGAAAEDSCDARGNLQPAPAQPPGDPAAQASVSNGEDAGGGVGKELVDLKIIWNKTKHDVKVPLDSTGSELKQKIHSITGLPPAMQKVMYKGLVPEDKTLREIKVTSGAKIMVVGSTINDVLAVNTPKDAAQQDAKAEENKKEPLCRQKQHRKVLDKGKPEDVMPSVKGAQERLPTVPLSGMYNKSGGKVRLTFKLEQDQLWIGTKERTEKLPMGSIKNVVSEPIEGHEDYHMMAFQLGPTEASYYWVYWVPTQYVDAIKDTVLGKWQYF</sequence>
<organism>
    <name type="scientific">Mus musculus</name>
    <name type="common">Mouse</name>
    <dbReference type="NCBI Taxonomy" id="10090"/>
    <lineage>
        <taxon>Eukaryota</taxon>
        <taxon>Metazoa</taxon>
        <taxon>Chordata</taxon>
        <taxon>Craniata</taxon>
        <taxon>Vertebrata</taxon>
        <taxon>Euteleostomi</taxon>
        <taxon>Mammalia</taxon>
        <taxon>Eutheria</taxon>
        <taxon>Euarchontoglires</taxon>
        <taxon>Glires</taxon>
        <taxon>Rodentia</taxon>
        <taxon>Myomorpha</taxon>
        <taxon>Muroidea</taxon>
        <taxon>Muridae</taxon>
        <taxon>Murinae</taxon>
        <taxon>Mus</taxon>
        <taxon>Mus</taxon>
    </lineage>
</organism>
<feature type="chain" id="PRO_0000283076" description="Ubiquitin domain-containing protein UBFD1">
    <location>
        <begin position="1"/>
        <end position="368"/>
    </location>
</feature>
<feature type="domain" description="Ubiquitin-like" evidence="1">
    <location>
        <begin position="143"/>
        <end position="218"/>
    </location>
</feature>
<feature type="region of interest" description="Disordered" evidence="2">
    <location>
        <begin position="106"/>
        <end position="139"/>
    </location>
</feature>
<feature type="region of interest" description="Disordered" evidence="2">
    <location>
        <begin position="231"/>
        <end position="263"/>
    </location>
</feature>
<feature type="compositionally biased region" description="Basic and acidic residues" evidence="2">
    <location>
        <begin position="233"/>
        <end position="244"/>
    </location>
</feature>
<feature type="compositionally biased region" description="Basic and acidic residues" evidence="2">
    <location>
        <begin position="251"/>
        <end position="260"/>
    </location>
</feature>
<feature type="strand" evidence="3">
    <location>
        <begin position="145"/>
        <end position="151"/>
    </location>
</feature>
<feature type="strand" evidence="3">
    <location>
        <begin position="154"/>
        <end position="160"/>
    </location>
</feature>
<feature type="helix" evidence="3">
    <location>
        <begin position="166"/>
        <end position="177"/>
    </location>
</feature>
<feature type="strand" evidence="3">
    <location>
        <begin position="187"/>
        <end position="191"/>
    </location>
</feature>
<feature type="strand" evidence="3">
    <location>
        <begin position="194"/>
        <end position="197"/>
    </location>
</feature>
<feature type="helix" evidence="3">
    <location>
        <begin position="198"/>
        <end position="201"/>
    </location>
</feature>
<feature type="strand" evidence="3">
    <location>
        <begin position="207"/>
        <end position="211"/>
    </location>
</feature>
<gene>
    <name type="primary">Ubfd1</name>
    <name type="synonym">D7Wsu128e</name>
</gene>